<feature type="chain" id="PRO_0000394982" description="Cation/H(+) antiporter 11">
    <location>
        <begin position="1"/>
        <end position="783"/>
    </location>
</feature>
<feature type="transmembrane region" description="Helical" evidence="2">
    <location>
        <begin position="31"/>
        <end position="51"/>
    </location>
</feature>
<feature type="transmembrane region" description="Helical" evidence="2">
    <location>
        <begin position="61"/>
        <end position="81"/>
    </location>
</feature>
<feature type="transmembrane region" description="Helical" evidence="2">
    <location>
        <begin position="101"/>
        <end position="120"/>
    </location>
</feature>
<feature type="transmembrane region" description="Helical" evidence="2">
    <location>
        <begin position="135"/>
        <end position="155"/>
    </location>
</feature>
<feature type="transmembrane region" description="Helical" evidence="2">
    <location>
        <begin position="175"/>
        <end position="195"/>
    </location>
</feature>
<feature type="transmembrane region" description="Helical" evidence="2">
    <location>
        <begin position="205"/>
        <end position="225"/>
    </location>
</feature>
<feature type="transmembrane region" description="Helical" evidence="2">
    <location>
        <begin position="244"/>
        <end position="264"/>
    </location>
</feature>
<feature type="transmembrane region" description="Helical" evidence="2">
    <location>
        <begin position="276"/>
        <end position="295"/>
    </location>
</feature>
<feature type="transmembrane region" description="Helical" evidence="2">
    <location>
        <begin position="300"/>
        <end position="322"/>
    </location>
</feature>
<feature type="transmembrane region" description="Helical" evidence="2">
    <location>
        <begin position="360"/>
        <end position="380"/>
    </location>
</feature>
<feature type="transmembrane region" description="Helical" evidence="2">
    <location>
        <begin position="389"/>
        <end position="409"/>
    </location>
</feature>
<feature type="transmembrane region" description="Helical" evidence="2">
    <location>
        <begin position="418"/>
        <end position="438"/>
    </location>
</feature>
<sequence>MNTTTYIGHCRISFFNISSQGFWENLKSPDVVFGYSLPLLEIQIILIFFCIVMSHMFLRCIGVSQIVSYMIAGLILGPQLFDILEKSSGKLSADPALDGTAALRCISVFGRLMFTFLMTVRTSRRVAFHSGKLPVVIGIVSFFAPLFSLSFLNLFTDNIDPHYMSLDKALAERTVIVITQSQILLPSTTYILLELKIINSELGRLALSASAINDMLGIFAMIVATTQATYIHVSHAIAYRDLVAVIIFFLIVFFVFKPMVQWIIDRTPEDKPVEDIYIHAVILTAFASAAYFVFFNMKYVLGPLIIGIIIPEGPPLGSALEAKFERLTMNVFLPISITFSAMRCDGLRILSQFTDIYFNIFLTLLILVIKLVACLTLCLYYKLPRSESLAVSLILSYKSFVEFVLYEAVLEEKFISQATYAFLILYSLLSAGIVPMVVRSMYDPKRKYVNYQKRDILHLEANSGLRILTCLHKPENVSETIAFLQLFSSPIHDFPIAVTVLHLVKLVGQINPIIVSHDKKLKRLHKNSYIHTANLAFRQFMQESLESVTVTTFTAFSHENLMHEDICTLALDRTTSMIVVPSGRKWTVDGMFESDDLAARQLNQSLLDRAPCSIGILVDRGQFSRKSYVTSKNRYNIDVGVLFIGGKDDREALSLVKRMKYNPRVRVTVIRLIFDHEIESEWDYILDNEGLKDLKSTESNEDILYTERIVTSVVEVVKAVQLLAEEYDLMVVGRDHDMTSQDLSGLTEWVELPELGVIGDLLAARDLNSKVSVLVVQQQQQQT</sequence>
<evidence type="ECO:0000250" key="1"/>
<evidence type="ECO:0000255" key="2"/>
<evidence type="ECO:0000269" key="3">
    <source>
    </source>
</evidence>
<evidence type="ECO:0000305" key="4"/>
<comment type="function">
    <text evidence="1">May operate as a cation/H(+) antiporter.</text>
</comment>
<comment type="subcellular location">
    <subcellularLocation>
        <location evidence="1">Membrane</location>
        <topology evidence="1">Multi-pass membrane protein</topology>
    </subcellularLocation>
</comment>
<comment type="tissue specificity">
    <text evidence="3">Specifically expressed in pollen.</text>
</comment>
<comment type="similarity">
    <text evidence="4">Belongs to the monovalent cation:proton antiporter 2 (CPA2) transporter (TC 2.A.37) family. CHX (TC 2.A.37.4) subfamily.</text>
</comment>
<comment type="sequence caution" evidence="4">
    <conflict type="erroneous gene model prediction">
        <sequence resource="EMBL-CDS" id="CAC03542"/>
    </conflict>
</comment>
<accession>Q9FYB9</accession>
<name>CHX11_ARATH</name>
<reference key="1">
    <citation type="journal article" date="2000" name="Nature">
        <title>Sequence and analysis of chromosome 3 of the plant Arabidopsis thaliana.</title>
        <authorList>
            <person name="Salanoubat M."/>
            <person name="Lemcke K."/>
            <person name="Rieger M."/>
            <person name="Ansorge W."/>
            <person name="Unseld M."/>
            <person name="Fartmann B."/>
            <person name="Valle G."/>
            <person name="Bloecker H."/>
            <person name="Perez-Alonso M."/>
            <person name="Obermaier B."/>
            <person name="Delseny M."/>
            <person name="Boutry M."/>
            <person name="Grivell L.A."/>
            <person name="Mache R."/>
            <person name="Puigdomenech P."/>
            <person name="De Simone V."/>
            <person name="Choisne N."/>
            <person name="Artiguenave F."/>
            <person name="Robert C."/>
            <person name="Brottier P."/>
            <person name="Wincker P."/>
            <person name="Cattolico L."/>
            <person name="Weissenbach J."/>
            <person name="Saurin W."/>
            <person name="Quetier F."/>
            <person name="Schaefer M."/>
            <person name="Mueller-Auer S."/>
            <person name="Gabel C."/>
            <person name="Fuchs M."/>
            <person name="Benes V."/>
            <person name="Wurmbach E."/>
            <person name="Drzonek H."/>
            <person name="Erfle H."/>
            <person name="Jordan N."/>
            <person name="Bangert S."/>
            <person name="Wiedelmann R."/>
            <person name="Kranz H."/>
            <person name="Voss H."/>
            <person name="Holland R."/>
            <person name="Brandt P."/>
            <person name="Nyakatura G."/>
            <person name="Vezzi A."/>
            <person name="D'Angelo M."/>
            <person name="Pallavicini A."/>
            <person name="Toppo S."/>
            <person name="Simionati B."/>
            <person name="Conrad A."/>
            <person name="Hornischer K."/>
            <person name="Kauer G."/>
            <person name="Loehnert T.-H."/>
            <person name="Nordsiek G."/>
            <person name="Reichelt J."/>
            <person name="Scharfe M."/>
            <person name="Schoen O."/>
            <person name="Bargues M."/>
            <person name="Terol J."/>
            <person name="Climent J."/>
            <person name="Navarro P."/>
            <person name="Collado C."/>
            <person name="Perez-Perez A."/>
            <person name="Ottenwaelder B."/>
            <person name="Duchemin D."/>
            <person name="Cooke R."/>
            <person name="Laudie M."/>
            <person name="Berger-Llauro C."/>
            <person name="Purnelle B."/>
            <person name="Masuy D."/>
            <person name="de Haan M."/>
            <person name="Maarse A.C."/>
            <person name="Alcaraz J.-P."/>
            <person name="Cottet A."/>
            <person name="Casacuberta E."/>
            <person name="Monfort A."/>
            <person name="Argiriou A."/>
            <person name="Flores M."/>
            <person name="Liguori R."/>
            <person name="Vitale D."/>
            <person name="Mannhaupt G."/>
            <person name="Haase D."/>
            <person name="Schoof H."/>
            <person name="Rudd S."/>
            <person name="Zaccaria P."/>
            <person name="Mewes H.-W."/>
            <person name="Mayer K.F.X."/>
            <person name="Kaul S."/>
            <person name="Town C.D."/>
            <person name="Koo H.L."/>
            <person name="Tallon L.J."/>
            <person name="Jenkins J."/>
            <person name="Rooney T."/>
            <person name="Rizzo M."/>
            <person name="Walts A."/>
            <person name="Utterback T."/>
            <person name="Fujii C.Y."/>
            <person name="Shea T.P."/>
            <person name="Creasy T.H."/>
            <person name="Haas B."/>
            <person name="Maiti R."/>
            <person name="Wu D."/>
            <person name="Peterson J."/>
            <person name="Van Aken S."/>
            <person name="Pai G."/>
            <person name="Militscher J."/>
            <person name="Sellers P."/>
            <person name="Gill J.E."/>
            <person name="Feldblyum T.V."/>
            <person name="Preuss D."/>
            <person name="Lin X."/>
            <person name="Nierman W.C."/>
            <person name="Salzberg S.L."/>
            <person name="White O."/>
            <person name="Venter J.C."/>
            <person name="Fraser C.M."/>
            <person name="Kaneko T."/>
            <person name="Nakamura Y."/>
            <person name="Sato S."/>
            <person name="Kato T."/>
            <person name="Asamizu E."/>
            <person name="Sasamoto S."/>
            <person name="Kimura T."/>
            <person name="Idesawa K."/>
            <person name="Kawashima K."/>
            <person name="Kishida Y."/>
            <person name="Kiyokawa C."/>
            <person name="Kohara M."/>
            <person name="Matsumoto M."/>
            <person name="Matsuno A."/>
            <person name="Muraki A."/>
            <person name="Nakayama S."/>
            <person name="Nakazaki N."/>
            <person name="Shinpo S."/>
            <person name="Takeuchi C."/>
            <person name="Wada T."/>
            <person name="Watanabe A."/>
            <person name="Yamada M."/>
            <person name="Yasuda M."/>
            <person name="Tabata S."/>
        </authorList>
    </citation>
    <scope>NUCLEOTIDE SEQUENCE [LARGE SCALE GENOMIC DNA]</scope>
    <source>
        <strain>cv. Columbia</strain>
    </source>
</reference>
<reference key="2">
    <citation type="journal article" date="2017" name="Plant J.">
        <title>Araport11: a complete reannotation of the Arabidopsis thaliana reference genome.</title>
        <authorList>
            <person name="Cheng C.Y."/>
            <person name="Krishnakumar V."/>
            <person name="Chan A.P."/>
            <person name="Thibaud-Nissen F."/>
            <person name="Schobel S."/>
            <person name="Town C.D."/>
        </authorList>
    </citation>
    <scope>GENOME REANNOTATION</scope>
    <source>
        <strain>cv. Columbia</strain>
    </source>
</reference>
<reference key="3">
    <citation type="journal article" date="2001" name="Plant Physiol.">
        <title>Phylogenetic relationships within cation transporter families of Arabidopsis.</title>
        <authorList>
            <person name="Maeser P."/>
            <person name="Thomine S."/>
            <person name="Schroeder J.I."/>
            <person name="Ward J.M."/>
            <person name="Hirschi K."/>
            <person name="Sze H."/>
            <person name="Talke I.N."/>
            <person name="Amtmann A."/>
            <person name="Maathuis F.J.M."/>
            <person name="Sanders D."/>
            <person name="Harper J.F."/>
            <person name="Tchieu J."/>
            <person name="Gribskov M."/>
            <person name="Persans M.W."/>
            <person name="Salt D.E."/>
            <person name="Kim S.A."/>
            <person name="Guerinot M.L."/>
        </authorList>
    </citation>
    <scope>GENE FAMILY</scope>
    <scope>NOMENCLATURE</scope>
</reference>
<reference key="4">
    <citation type="journal article" date="2004" name="Plant Physiol.">
        <title>Expression patterns of a novel AtCHX gene family highlight potential roles in osmotic adjustment and K+ homeostasis in pollen development.</title>
        <authorList>
            <person name="Sze H."/>
            <person name="Padmanaban S."/>
            <person name="Cellier F."/>
            <person name="Honys D."/>
            <person name="Cheng N.-H."/>
            <person name="Bock K.W."/>
            <person name="Conejero G."/>
            <person name="Li X."/>
            <person name="Twell D."/>
            <person name="Ward J.M."/>
            <person name="Hirschi K.D."/>
        </authorList>
    </citation>
    <scope>TISSUE SPECIFICITY</scope>
    <scope>GENE FAMILY</scope>
    <scope>NOMENCLATURE</scope>
</reference>
<organism>
    <name type="scientific">Arabidopsis thaliana</name>
    <name type="common">Mouse-ear cress</name>
    <dbReference type="NCBI Taxonomy" id="3702"/>
    <lineage>
        <taxon>Eukaryota</taxon>
        <taxon>Viridiplantae</taxon>
        <taxon>Streptophyta</taxon>
        <taxon>Embryophyta</taxon>
        <taxon>Tracheophyta</taxon>
        <taxon>Spermatophyta</taxon>
        <taxon>Magnoliopsida</taxon>
        <taxon>eudicotyledons</taxon>
        <taxon>Gunneridae</taxon>
        <taxon>Pentapetalae</taxon>
        <taxon>rosids</taxon>
        <taxon>malvids</taxon>
        <taxon>Brassicales</taxon>
        <taxon>Brassicaceae</taxon>
        <taxon>Camelineae</taxon>
        <taxon>Arabidopsis</taxon>
    </lineage>
</organism>
<protein>
    <recommendedName>
        <fullName>Cation/H(+) antiporter 11</fullName>
    </recommendedName>
    <alternativeName>
        <fullName>Protein CATION/H+ EXCHANGER 11</fullName>
        <shortName>AtCHX11</shortName>
    </alternativeName>
</protein>
<proteinExistence type="evidence at transcript level"/>
<dbReference type="EMBL" id="AL391254">
    <property type="protein sequence ID" value="CAC03542.1"/>
    <property type="status" value="ALT_SEQ"/>
    <property type="molecule type" value="Genomic_DNA"/>
</dbReference>
<dbReference type="EMBL" id="CP002686">
    <property type="protein sequence ID" value="AEE77968.1"/>
    <property type="molecule type" value="Genomic_DNA"/>
</dbReference>
<dbReference type="PIR" id="T51789">
    <property type="entry name" value="T51789"/>
</dbReference>
<dbReference type="RefSeq" id="NP_190078.2">
    <property type="nucleotide sequence ID" value="NM_114361.3"/>
</dbReference>
<dbReference type="SMR" id="Q9FYB9"/>
<dbReference type="STRING" id="3702.Q9FYB9"/>
<dbReference type="iPTMnet" id="Q9FYB9"/>
<dbReference type="PaxDb" id="3702-AT3G44920.1"/>
<dbReference type="ProteomicsDB" id="246837"/>
<dbReference type="EnsemblPlants" id="AT3G44920.1">
    <property type="protein sequence ID" value="AT3G44920.1"/>
    <property type="gene ID" value="AT3G44920"/>
</dbReference>
<dbReference type="GeneID" id="823626"/>
<dbReference type="Gramene" id="AT3G44920.1">
    <property type="protein sequence ID" value="AT3G44920.1"/>
    <property type="gene ID" value="AT3G44920"/>
</dbReference>
<dbReference type="KEGG" id="ath:AT3G44920"/>
<dbReference type="Araport" id="AT3G44920"/>
<dbReference type="TAIR" id="AT3G44920">
    <property type="gene designation" value="CHX11"/>
</dbReference>
<dbReference type="eggNOG" id="KOG1650">
    <property type="taxonomic scope" value="Eukaryota"/>
</dbReference>
<dbReference type="HOGENOM" id="CLU_005126_6_1_1"/>
<dbReference type="InParanoid" id="Q9FYB9"/>
<dbReference type="OMA" id="IESEWDY"/>
<dbReference type="PhylomeDB" id="Q9FYB9"/>
<dbReference type="PRO" id="PR:Q9FYB9"/>
<dbReference type="Proteomes" id="UP000006548">
    <property type="component" value="Chromosome 3"/>
</dbReference>
<dbReference type="ExpressionAtlas" id="Q9FYB9">
    <property type="expression patterns" value="baseline and differential"/>
</dbReference>
<dbReference type="GO" id="GO:0016020">
    <property type="term" value="C:membrane"/>
    <property type="evidence" value="ECO:0007669"/>
    <property type="project" value="UniProtKB-SubCell"/>
</dbReference>
<dbReference type="GO" id="GO:0015297">
    <property type="term" value="F:antiporter activity"/>
    <property type="evidence" value="ECO:0007669"/>
    <property type="project" value="UniProtKB-KW"/>
</dbReference>
<dbReference type="GO" id="GO:0006813">
    <property type="term" value="P:potassium ion transport"/>
    <property type="evidence" value="ECO:0007669"/>
    <property type="project" value="UniProtKB-KW"/>
</dbReference>
<dbReference type="GO" id="GO:1902600">
    <property type="term" value="P:proton transmembrane transport"/>
    <property type="evidence" value="ECO:0007669"/>
    <property type="project" value="InterPro"/>
</dbReference>
<dbReference type="Gene3D" id="1.20.1530.20">
    <property type="match status" value="1"/>
</dbReference>
<dbReference type="InterPro" id="IPR006153">
    <property type="entry name" value="Cation/H_exchanger_TM"/>
</dbReference>
<dbReference type="InterPro" id="IPR050794">
    <property type="entry name" value="CPA2_transporter"/>
</dbReference>
<dbReference type="InterPro" id="IPR038770">
    <property type="entry name" value="Na+/solute_symporter_sf"/>
</dbReference>
<dbReference type="PANTHER" id="PTHR32468">
    <property type="entry name" value="CATION/H + ANTIPORTER"/>
    <property type="match status" value="1"/>
</dbReference>
<dbReference type="PANTHER" id="PTHR32468:SF169">
    <property type="entry name" value="CATION_H(+) ANTIPORTER 10-RELATED"/>
    <property type="match status" value="1"/>
</dbReference>
<dbReference type="Pfam" id="PF23256">
    <property type="entry name" value="CHX17_2nd"/>
    <property type="match status" value="1"/>
</dbReference>
<dbReference type="Pfam" id="PF23259">
    <property type="entry name" value="CHX17_C"/>
    <property type="match status" value="1"/>
</dbReference>
<dbReference type="Pfam" id="PF00999">
    <property type="entry name" value="Na_H_Exchanger"/>
    <property type="match status" value="1"/>
</dbReference>
<keyword id="KW-0050">Antiport</keyword>
<keyword id="KW-0406">Ion transport</keyword>
<keyword id="KW-0472">Membrane</keyword>
<keyword id="KW-0630">Potassium</keyword>
<keyword id="KW-0633">Potassium transport</keyword>
<keyword id="KW-1185">Reference proteome</keyword>
<keyword id="KW-0812">Transmembrane</keyword>
<keyword id="KW-1133">Transmembrane helix</keyword>
<keyword id="KW-0813">Transport</keyword>
<gene>
    <name type="primary">CHX11</name>
    <name type="ordered locus">At3g44920</name>
    <name type="ORF">F28D10_110</name>
</gene>